<feature type="chain" id="PRO_0000150655" description="Olfactory receptor 8B3">
    <location>
        <begin position="1"/>
        <end position="313"/>
    </location>
</feature>
<feature type="topological domain" description="Extracellular" evidence="1">
    <location>
        <begin position="1"/>
        <end position="25"/>
    </location>
</feature>
<feature type="transmembrane region" description="Helical; Name=1" evidence="1">
    <location>
        <begin position="26"/>
        <end position="46"/>
    </location>
</feature>
<feature type="topological domain" description="Cytoplasmic" evidence="1">
    <location>
        <begin position="47"/>
        <end position="54"/>
    </location>
</feature>
<feature type="transmembrane region" description="Helical; Name=2" evidence="1">
    <location>
        <begin position="55"/>
        <end position="75"/>
    </location>
</feature>
<feature type="topological domain" description="Extracellular" evidence="1">
    <location>
        <begin position="76"/>
        <end position="99"/>
    </location>
</feature>
<feature type="transmembrane region" description="Helical; Name=3" evidence="1">
    <location>
        <begin position="100"/>
        <end position="120"/>
    </location>
</feature>
<feature type="topological domain" description="Cytoplasmic" evidence="1">
    <location>
        <begin position="121"/>
        <end position="139"/>
    </location>
</feature>
<feature type="transmembrane region" description="Helical; Name=4" evidence="1">
    <location>
        <begin position="140"/>
        <end position="160"/>
    </location>
</feature>
<feature type="topological domain" description="Extracellular" evidence="1">
    <location>
        <begin position="161"/>
        <end position="197"/>
    </location>
</feature>
<feature type="transmembrane region" description="Helical; Name=5" evidence="1">
    <location>
        <begin position="198"/>
        <end position="217"/>
    </location>
</feature>
<feature type="topological domain" description="Cytoplasmic" evidence="1">
    <location>
        <begin position="218"/>
        <end position="237"/>
    </location>
</feature>
<feature type="transmembrane region" description="Helical; Name=6" evidence="1">
    <location>
        <begin position="238"/>
        <end position="258"/>
    </location>
</feature>
<feature type="topological domain" description="Extracellular" evidence="1">
    <location>
        <begin position="259"/>
        <end position="270"/>
    </location>
</feature>
<feature type="transmembrane region" description="Helical; Name=7" evidence="1">
    <location>
        <begin position="271"/>
        <end position="291"/>
    </location>
</feature>
<feature type="topological domain" description="Cytoplasmic" evidence="1">
    <location>
        <begin position="292"/>
        <end position="313"/>
    </location>
</feature>
<feature type="glycosylation site" description="N-linked (GlcNAc...) asparagine" evidence="1">
    <location>
        <position position="5"/>
    </location>
</feature>
<feature type="disulfide bond" evidence="2">
    <location>
        <begin position="97"/>
        <end position="189"/>
    </location>
</feature>
<feature type="sequence variant" id="VAR_047145" description="In dbSNP:rs507335." evidence="3 4">
    <original>H</original>
    <variation>R</variation>
    <location>
        <position position="20"/>
    </location>
</feature>
<feature type="sequence variant" id="VAR_047146" description="In dbSNP:rs530992." evidence="4">
    <original>M</original>
    <variation>I</variation>
    <location>
        <position position="114"/>
    </location>
</feature>
<feature type="sequence conflict" description="In Ref. 1; BAC06046." evidence="5" ref="1">
    <original>Q</original>
    <variation>R</variation>
    <location>
        <position position="24"/>
    </location>
</feature>
<feature type="sequence conflict" description="In Ref. 1; BAC06046." evidence="5" ref="1">
    <original>V</original>
    <variation>I</variation>
    <location>
        <position position="34"/>
    </location>
</feature>
<name>OR8B3_HUMAN</name>
<accession>Q8NGG8</accession>
<accession>Q6IFQ8</accession>
<accession>Q8NGH1</accession>
<protein>
    <recommendedName>
        <fullName>Olfactory receptor 8B3</fullName>
    </recommendedName>
    <alternativeName>
        <fullName>Olfactory receptor OR11-311</fullName>
    </alternativeName>
</protein>
<proteinExistence type="inferred from homology"/>
<comment type="function">
    <text evidence="5">Odorant receptor.</text>
</comment>
<comment type="subcellular location">
    <subcellularLocation>
        <location>Cell membrane</location>
        <topology>Multi-pass membrane protein</topology>
    </subcellularLocation>
</comment>
<comment type="similarity">
    <text evidence="2">Belongs to the G-protein coupled receptor 1 family.</text>
</comment>
<comment type="online information" name="Human Olfactory Receptor Data Exploratorium (HORDE)">
    <link uri="http://genome.weizmann.ac.il/horde/card/index/symbol:OR8B3"/>
</comment>
<keyword id="KW-1003">Cell membrane</keyword>
<keyword id="KW-1015">Disulfide bond</keyword>
<keyword id="KW-0297">G-protein coupled receptor</keyword>
<keyword id="KW-0325">Glycoprotein</keyword>
<keyword id="KW-0472">Membrane</keyword>
<keyword id="KW-0552">Olfaction</keyword>
<keyword id="KW-0675">Receptor</keyword>
<keyword id="KW-1185">Reference proteome</keyword>
<keyword id="KW-0716">Sensory transduction</keyword>
<keyword id="KW-0807">Transducer</keyword>
<keyword id="KW-0812">Transmembrane</keyword>
<keyword id="KW-1133">Transmembrane helix</keyword>
<sequence>MLARNNSLVTEFILAGLTDHPEFQQPLFFLFLVVYIVTMVGNLGLIILFGLNSHLHTPMYYFLFNLSFIDLCYSSVFTPKMLMNFVSKKNIISYVGCMTQLFFFLFFVISECYMLTSMAYDRYVAICNPLLYKVTMSHQVCSMLTFAAYIMGLAGATAHTGCMLRLTFCSANIINHYLCDILPLLQLSCTSTYVNEVVVLIVVGINIMVPSCTILISYVFIVTSILHIKSTQGRSKAFSTCSSHVIALSLFFGSAAFMYIKYSSGSMEQGKVSSVFYTNVVPMLNPLIYSLRNKDVKVALRKALIKIQRRNIF</sequence>
<organism>
    <name type="scientific">Homo sapiens</name>
    <name type="common">Human</name>
    <dbReference type="NCBI Taxonomy" id="9606"/>
    <lineage>
        <taxon>Eukaryota</taxon>
        <taxon>Metazoa</taxon>
        <taxon>Chordata</taxon>
        <taxon>Craniata</taxon>
        <taxon>Vertebrata</taxon>
        <taxon>Euteleostomi</taxon>
        <taxon>Mammalia</taxon>
        <taxon>Eutheria</taxon>
        <taxon>Euarchontoglires</taxon>
        <taxon>Primates</taxon>
        <taxon>Haplorrhini</taxon>
        <taxon>Catarrhini</taxon>
        <taxon>Hominidae</taxon>
        <taxon>Homo</taxon>
    </lineage>
</organism>
<dbReference type="EMBL" id="AB065827">
    <property type="protein sequence ID" value="BAC06046.1"/>
    <property type="molecule type" value="Genomic_DNA"/>
</dbReference>
<dbReference type="EMBL" id="AB065830">
    <property type="protein sequence ID" value="BAC06049.1"/>
    <property type="molecule type" value="Genomic_DNA"/>
</dbReference>
<dbReference type="EMBL" id="AC002556">
    <property type="status" value="NOT_ANNOTATED_CDS"/>
    <property type="molecule type" value="Genomic_DNA"/>
</dbReference>
<dbReference type="EMBL" id="AP001804">
    <property type="status" value="NOT_ANNOTATED_CDS"/>
    <property type="molecule type" value="Genomic_DNA"/>
</dbReference>
<dbReference type="EMBL" id="BK004204">
    <property type="protein sequence ID" value="DAA04602.1"/>
    <property type="molecule type" value="Genomic_DNA"/>
</dbReference>
<dbReference type="CCDS" id="CCDS31709.1"/>
<dbReference type="RefSeq" id="NP_001005467.1">
    <property type="nucleotide sequence ID" value="NM_001005467.2"/>
</dbReference>
<dbReference type="RefSeq" id="XP_016873205.1">
    <property type="nucleotide sequence ID" value="XM_017017716.2"/>
</dbReference>
<dbReference type="RefSeq" id="XP_016873206.1">
    <property type="nucleotide sequence ID" value="XM_017017717.1"/>
</dbReference>
<dbReference type="RefSeq" id="XP_016873207.1">
    <property type="nucleotide sequence ID" value="XM_017017718.1"/>
</dbReference>
<dbReference type="SMR" id="Q8NGG8"/>
<dbReference type="BioGRID" id="133483">
    <property type="interactions" value="1"/>
</dbReference>
<dbReference type="FunCoup" id="Q8NGG8">
    <property type="interactions" value="467"/>
</dbReference>
<dbReference type="STRING" id="9606.ENSP00000493120"/>
<dbReference type="GlyCosmos" id="Q8NGG8">
    <property type="glycosylation" value="1 site, No reported glycans"/>
</dbReference>
<dbReference type="GlyGen" id="Q8NGG8">
    <property type="glycosylation" value="1 site"/>
</dbReference>
<dbReference type="PhosphoSitePlus" id="Q8NGG8"/>
<dbReference type="BioMuta" id="OR8B3"/>
<dbReference type="DMDM" id="311033419"/>
<dbReference type="MassIVE" id="Q8NGG8"/>
<dbReference type="PaxDb" id="9606-ENSP00000346611"/>
<dbReference type="Antibodypedia" id="78416">
    <property type="antibodies" value="17 antibodies from 11 providers"/>
</dbReference>
<dbReference type="DNASU" id="390271"/>
<dbReference type="Ensembl" id="ENST00000641139.1">
    <property type="protein sequence ID" value="ENSP00000493120.1"/>
    <property type="gene ID" value="ENSG00000284609.2"/>
</dbReference>
<dbReference type="GeneID" id="390271"/>
<dbReference type="KEGG" id="hsa:390271"/>
<dbReference type="MANE-Select" id="ENST00000641139.1">
    <property type="protein sequence ID" value="ENSP00000493120.1"/>
    <property type="RefSeq nucleotide sequence ID" value="NM_001005467.2"/>
    <property type="RefSeq protein sequence ID" value="NP_001005467.1"/>
</dbReference>
<dbReference type="UCSC" id="uc010saj.3">
    <property type="organism name" value="human"/>
</dbReference>
<dbReference type="AGR" id="HGNC:8472"/>
<dbReference type="CTD" id="390271"/>
<dbReference type="DisGeNET" id="390271"/>
<dbReference type="GeneCards" id="OR8B3"/>
<dbReference type="HGNC" id="HGNC:8472">
    <property type="gene designation" value="OR8B3"/>
</dbReference>
<dbReference type="HPA" id="ENSG00000284609">
    <property type="expression patterns" value="Not detected"/>
</dbReference>
<dbReference type="neXtProt" id="NX_Q8NGG8"/>
<dbReference type="PharmGKB" id="PA32751"/>
<dbReference type="VEuPathDB" id="HostDB:ENSG00000284609"/>
<dbReference type="eggNOG" id="ENOG502RTZT">
    <property type="taxonomic scope" value="Eukaryota"/>
</dbReference>
<dbReference type="GeneTree" id="ENSGT01010000222320"/>
<dbReference type="HOGENOM" id="CLU_012526_1_0_1"/>
<dbReference type="InParanoid" id="Q8NGG8"/>
<dbReference type="OMA" id="FFCSHRF"/>
<dbReference type="OrthoDB" id="9829559at2759"/>
<dbReference type="PAN-GO" id="Q8NGG8">
    <property type="GO annotations" value="4 GO annotations based on evolutionary models"/>
</dbReference>
<dbReference type="PhylomeDB" id="Q8NGG8"/>
<dbReference type="TreeFam" id="TF352753"/>
<dbReference type="PathwayCommons" id="Q8NGG8"/>
<dbReference type="Reactome" id="R-HSA-381753">
    <property type="pathway name" value="Olfactory Signaling Pathway"/>
</dbReference>
<dbReference type="Reactome" id="R-HSA-9752946">
    <property type="pathway name" value="Expression and translocation of olfactory receptors"/>
</dbReference>
<dbReference type="BioGRID-ORCS" id="390271">
    <property type="hits" value="8 hits in 635 CRISPR screens"/>
</dbReference>
<dbReference type="GenomeRNAi" id="390271"/>
<dbReference type="Pharos" id="Q8NGG8">
    <property type="development level" value="Tdark"/>
</dbReference>
<dbReference type="PRO" id="PR:Q8NGG8"/>
<dbReference type="Proteomes" id="UP000005640">
    <property type="component" value="Chromosome 11"/>
</dbReference>
<dbReference type="RNAct" id="Q8NGG8">
    <property type="molecule type" value="protein"/>
</dbReference>
<dbReference type="Bgee" id="ENSG00000284609">
    <property type="expression patterns" value="Expressed in male germ line stem cell (sensu Vertebrata) in testis and 3 other cell types or tissues"/>
</dbReference>
<dbReference type="GO" id="GO:0005886">
    <property type="term" value="C:plasma membrane"/>
    <property type="evidence" value="ECO:0000304"/>
    <property type="project" value="Reactome"/>
</dbReference>
<dbReference type="GO" id="GO:0004930">
    <property type="term" value="F:G protein-coupled receptor activity"/>
    <property type="evidence" value="ECO:0007669"/>
    <property type="project" value="UniProtKB-KW"/>
</dbReference>
<dbReference type="GO" id="GO:0005549">
    <property type="term" value="F:odorant binding"/>
    <property type="evidence" value="ECO:0000318"/>
    <property type="project" value="GO_Central"/>
</dbReference>
<dbReference type="GO" id="GO:0004984">
    <property type="term" value="F:olfactory receptor activity"/>
    <property type="evidence" value="ECO:0000318"/>
    <property type="project" value="GO_Central"/>
</dbReference>
<dbReference type="GO" id="GO:0007186">
    <property type="term" value="P:G protein-coupled receptor signaling pathway"/>
    <property type="evidence" value="ECO:0000318"/>
    <property type="project" value="GO_Central"/>
</dbReference>
<dbReference type="GO" id="GO:0007608">
    <property type="term" value="P:sensory perception of smell"/>
    <property type="evidence" value="ECO:0000318"/>
    <property type="project" value="GO_Central"/>
</dbReference>
<dbReference type="CDD" id="cd15405">
    <property type="entry name" value="7tmA_OR8B-like"/>
    <property type="match status" value="1"/>
</dbReference>
<dbReference type="FunFam" id="1.20.1070.10:FF:000646">
    <property type="entry name" value="Olfactory receptor 887"/>
    <property type="match status" value="1"/>
</dbReference>
<dbReference type="FunFam" id="1.20.1070.10:FF:001035">
    <property type="entry name" value="Putative olfactory receptor"/>
    <property type="match status" value="1"/>
</dbReference>
<dbReference type="Gene3D" id="1.20.1070.10">
    <property type="entry name" value="Rhodopsin 7-helix transmembrane proteins"/>
    <property type="match status" value="1"/>
</dbReference>
<dbReference type="InterPro" id="IPR000276">
    <property type="entry name" value="GPCR_Rhodpsn"/>
</dbReference>
<dbReference type="InterPro" id="IPR017452">
    <property type="entry name" value="GPCR_Rhodpsn_7TM"/>
</dbReference>
<dbReference type="InterPro" id="IPR000725">
    <property type="entry name" value="Olfact_rcpt"/>
</dbReference>
<dbReference type="PANTHER" id="PTHR48018">
    <property type="entry name" value="OLFACTORY RECEPTOR"/>
    <property type="match status" value="1"/>
</dbReference>
<dbReference type="Pfam" id="PF13853">
    <property type="entry name" value="7tm_4"/>
    <property type="match status" value="1"/>
</dbReference>
<dbReference type="PRINTS" id="PR00237">
    <property type="entry name" value="GPCRRHODOPSN"/>
</dbReference>
<dbReference type="PRINTS" id="PR00245">
    <property type="entry name" value="OLFACTORYR"/>
</dbReference>
<dbReference type="SUPFAM" id="SSF81321">
    <property type="entry name" value="Family A G protein-coupled receptor-like"/>
    <property type="match status" value="1"/>
</dbReference>
<dbReference type="PROSITE" id="PS00237">
    <property type="entry name" value="G_PROTEIN_RECEP_F1_1"/>
    <property type="match status" value="1"/>
</dbReference>
<dbReference type="PROSITE" id="PS50262">
    <property type="entry name" value="G_PROTEIN_RECEP_F1_2"/>
    <property type="match status" value="1"/>
</dbReference>
<evidence type="ECO:0000255" key="1"/>
<evidence type="ECO:0000255" key="2">
    <source>
        <dbReference type="PROSITE-ProRule" id="PRU00521"/>
    </source>
</evidence>
<evidence type="ECO:0000269" key="3">
    <source>
    </source>
</evidence>
<evidence type="ECO:0000269" key="4">
    <source ref="1"/>
</evidence>
<evidence type="ECO:0000305" key="5"/>
<reference key="1">
    <citation type="submission" date="2001-07" db="EMBL/GenBank/DDBJ databases">
        <title>Genome-wide discovery and analysis of human seven transmembrane helix receptor genes.</title>
        <authorList>
            <person name="Suwa M."/>
            <person name="Sato T."/>
            <person name="Okouchi I."/>
            <person name="Arita M."/>
            <person name="Futami K."/>
            <person name="Matsumoto S."/>
            <person name="Tsutsumi S."/>
            <person name="Aburatani H."/>
            <person name="Asai K."/>
            <person name="Akiyama Y."/>
        </authorList>
    </citation>
    <scope>NUCLEOTIDE SEQUENCE [GENOMIC DNA]</scope>
    <scope>VARIANTS ARG-20 AND ILE-114</scope>
</reference>
<reference key="2">
    <citation type="journal article" date="2006" name="Nature">
        <title>Human chromosome 11 DNA sequence and analysis including novel gene identification.</title>
        <authorList>
            <person name="Taylor T.D."/>
            <person name="Noguchi H."/>
            <person name="Totoki Y."/>
            <person name="Toyoda A."/>
            <person name="Kuroki Y."/>
            <person name="Dewar K."/>
            <person name="Lloyd C."/>
            <person name="Itoh T."/>
            <person name="Takeda T."/>
            <person name="Kim D.-W."/>
            <person name="She X."/>
            <person name="Barlow K.F."/>
            <person name="Bloom T."/>
            <person name="Bruford E."/>
            <person name="Chang J.L."/>
            <person name="Cuomo C.A."/>
            <person name="Eichler E."/>
            <person name="FitzGerald M.G."/>
            <person name="Jaffe D.B."/>
            <person name="LaButti K."/>
            <person name="Nicol R."/>
            <person name="Park H.-S."/>
            <person name="Seaman C."/>
            <person name="Sougnez C."/>
            <person name="Yang X."/>
            <person name="Zimmer A.R."/>
            <person name="Zody M.C."/>
            <person name="Birren B.W."/>
            <person name="Nusbaum C."/>
            <person name="Fujiyama A."/>
            <person name="Hattori M."/>
            <person name="Rogers J."/>
            <person name="Lander E.S."/>
            <person name="Sakaki Y."/>
        </authorList>
    </citation>
    <scope>NUCLEOTIDE SEQUENCE [LARGE SCALE GENOMIC DNA]</scope>
</reference>
<reference key="3">
    <citation type="journal article" date="2004" name="Proc. Natl. Acad. Sci. U.S.A.">
        <title>The human olfactory receptor gene family.</title>
        <authorList>
            <person name="Malnic B."/>
            <person name="Godfrey P.A."/>
            <person name="Buck L.B."/>
        </authorList>
    </citation>
    <scope>IDENTIFICATION</scope>
    <scope>VARIANT ARG-20</scope>
</reference>
<reference key="4">
    <citation type="journal article" date="2004" name="Proc. Natl. Acad. Sci. U.S.A.">
        <authorList>
            <person name="Malnic B."/>
            <person name="Godfrey P.A."/>
            <person name="Buck L.B."/>
        </authorList>
    </citation>
    <scope>ERRATUM OF PUBMED:14983052</scope>
</reference>
<gene>
    <name type="primary">OR8B3</name>
</gene>